<comment type="function">
    <text evidence="1">Sigma factors are initiation factors that promote the attachment of RNA polymerase to specific initiation sites and are then released. This sigma factor controls the expression of flagella-related genes.</text>
</comment>
<comment type="subcellular location">
    <subcellularLocation>
        <location evidence="1">Cytoplasm</location>
    </subcellularLocation>
</comment>
<comment type="similarity">
    <text evidence="1">Belongs to the sigma-70 factor family. FliA subfamily.</text>
</comment>
<protein>
    <recommendedName>
        <fullName evidence="1">RNA polymerase sigma factor FliA</fullName>
    </recommendedName>
    <alternativeName>
        <fullName evidence="1">RNA polymerase sigma factor for flagellar operon</fullName>
    </alternativeName>
    <alternativeName>
        <fullName evidence="1">Sigma F</fullName>
    </alternativeName>
    <alternativeName>
        <fullName evidence="1">Sigma-28</fullName>
    </alternativeName>
</protein>
<feature type="chain" id="PRO_0000093983" description="RNA polymerase sigma factor FliA">
    <location>
        <begin position="1"/>
        <end position="239"/>
    </location>
</feature>
<feature type="DNA-binding region" description="H-T-H motif" evidence="1">
    <location>
        <begin position="207"/>
        <end position="226"/>
    </location>
</feature>
<feature type="region of interest" description="Sigma-70 factor domain-2" evidence="1">
    <location>
        <begin position="16"/>
        <end position="88"/>
    </location>
</feature>
<feature type="region of interest" description="Sigma-70 factor domain-3" evidence="1">
    <location>
        <begin position="96"/>
        <end position="166"/>
    </location>
</feature>
<feature type="region of interest" description="Sigma-70 factor domain-4" evidence="1">
    <location>
        <begin position="185"/>
        <end position="233"/>
    </location>
</feature>
<feature type="short sequence motif" description="Interaction with polymerase core subunit RpoC">
    <location>
        <begin position="43"/>
        <end position="46"/>
    </location>
</feature>
<dbReference type="EMBL" id="AE014075">
    <property type="protein sequence ID" value="AAN80796.1"/>
    <property type="molecule type" value="Genomic_DNA"/>
</dbReference>
<dbReference type="RefSeq" id="WP_001087467.1">
    <property type="nucleotide sequence ID" value="NZ_CP051263.1"/>
</dbReference>
<dbReference type="SMR" id="P0AEM7"/>
<dbReference type="STRING" id="199310.c2337"/>
<dbReference type="GeneID" id="93776231"/>
<dbReference type="KEGG" id="ecc:c2337"/>
<dbReference type="eggNOG" id="COG1191">
    <property type="taxonomic scope" value="Bacteria"/>
</dbReference>
<dbReference type="HOGENOM" id="CLU_014793_8_1_6"/>
<dbReference type="BioCyc" id="ECOL199310:C2337-MONOMER"/>
<dbReference type="Proteomes" id="UP000001410">
    <property type="component" value="Chromosome"/>
</dbReference>
<dbReference type="GO" id="GO:0005737">
    <property type="term" value="C:cytoplasm"/>
    <property type="evidence" value="ECO:0007669"/>
    <property type="project" value="UniProtKB-SubCell"/>
</dbReference>
<dbReference type="GO" id="GO:0003677">
    <property type="term" value="F:DNA binding"/>
    <property type="evidence" value="ECO:0007669"/>
    <property type="project" value="UniProtKB-UniRule"/>
</dbReference>
<dbReference type="GO" id="GO:0003899">
    <property type="term" value="F:DNA-directed RNA polymerase activity"/>
    <property type="evidence" value="ECO:0007669"/>
    <property type="project" value="InterPro"/>
</dbReference>
<dbReference type="GO" id="GO:0016987">
    <property type="term" value="F:sigma factor activity"/>
    <property type="evidence" value="ECO:0007669"/>
    <property type="project" value="UniProtKB-UniRule"/>
</dbReference>
<dbReference type="GO" id="GO:0006352">
    <property type="term" value="P:DNA-templated transcription initiation"/>
    <property type="evidence" value="ECO:0007669"/>
    <property type="project" value="UniProtKB-UniRule"/>
</dbReference>
<dbReference type="CDD" id="cd06171">
    <property type="entry name" value="Sigma70_r4"/>
    <property type="match status" value="1"/>
</dbReference>
<dbReference type="FunFam" id="1.10.1740.10:FF:000002">
    <property type="entry name" value="RNA polymerase sigma factor FliA"/>
    <property type="match status" value="1"/>
</dbReference>
<dbReference type="FunFam" id="1.20.140.160:FF:000001">
    <property type="entry name" value="RNA polymerase sigma factor FliA"/>
    <property type="match status" value="1"/>
</dbReference>
<dbReference type="Gene3D" id="1.10.1740.10">
    <property type="match status" value="1"/>
</dbReference>
<dbReference type="Gene3D" id="1.20.140.160">
    <property type="match status" value="1"/>
</dbReference>
<dbReference type="HAMAP" id="MF_00962">
    <property type="entry name" value="Sigma70_FliA"/>
    <property type="match status" value="1"/>
</dbReference>
<dbReference type="InterPro" id="IPR014284">
    <property type="entry name" value="RNA_pol_sigma-70_dom"/>
</dbReference>
<dbReference type="InterPro" id="IPR000943">
    <property type="entry name" value="RNA_pol_sigma70"/>
</dbReference>
<dbReference type="InterPro" id="IPR007627">
    <property type="entry name" value="RNA_pol_sigma70_r2"/>
</dbReference>
<dbReference type="InterPro" id="IPR007624">
    <property type="entry name" value="RNA_pol_sigma70_r3"/>
</dbReference>
<dbReference type="InterPro" id="IPR007630">
    <property type="entry name" value="RNA_pol_sigma70_r4"/>
</dbReference>
<dbReference type="InterPro" id="IPR012845">
    <property type="entry name" value="RNA_pol_sigma_FliA_WhiG"/>
</dbReference>
<dbReference type="InterPro" id="IPR013325">
    <property type="entry name" value="RNA_pol_sigma_r2"/>
</dbReference>
<dbReference type="InterPro" id="IPR013324">
    <property type="entry name" value="RNA_pol_sigma_r3/r4-like"/>
</dbReference>
<dbReference type="InterPro" id="IPR028617">
    <property type="entry name" value="Sigma70_FliA"/>
</dbReference>
<dbReference type="NCBIfam" id="TIGR02479">
    <property type="entry name" value="FliA_WhiG"/>
    <property type="match status" value="1"/>
</dbReference>
<dbReference type="NCBIfam" id="NF005413">
    <property type="entry name" value="PRK06986.1"/>
    <property type="match status" value="1"/>
</dbReference>
<dbReference type="NCBIfam" id="TIGR02937">
    <property type="entry name" value="sigma70-ECF"/>
    <property type="match status" value="1"/>
</dbReference>
<dbReference type="PANTHER" id="PTHR30385:SF7">
    <property type="entry name" value="RNA POLYMERASE SIGMA FACTOR FLIA"/>
    <property type="match status" value="1"/>
</dbReference>
<dbReference type="PANTHER" id="PTHR30385">
    <property type="entry name" value="SIGMA FACTOR F FLAGELLAR"/>
    <property type="match status" value="1"/>
</dbReference>
<dbReference type="Pfam" id="PF04542">
    <property type="entry name" value="Sigma70_r2"/>
    <property type="match status" value="1"/>
</dbReference>
<dbReference type="Pfam" id="PF04539">
    <property type="entry name" value="Sigma70_r3"/>
    <property type="match status" value="1"/>
</dbReference>
<dbReference type="Pfam" id="PF04545">
    <property type="entry name" value="Sigma70_r4"/>
    <property type="match status" value="1"/>
</dbReference>
<dbReference type="PIRSF" id="PIRSF000770">
    <property type="entry name" value="RNA_pol_sigma-SigE/K"/>
    <property type="match status" value="1"/>
</dbReference>
<dbReference type="PRINTS" id="PR00046">
    <property type="entry name" value="SIGMA70FCT"/>
</dbReference>
<dbReference type="SUPFAM" id="SSF88946">
    <property type="entry name" value="Sigma2 domain of RNA polymerase sigma factors"/>
    <property type="match status" value="1"/>
</dbReference>
<dbReference type="SUPFAM" id="SSF88659">
    <property type="entry name" value="Sigma3 and sigma4 domains of RNA polymerase sigma factors"/>
    <property type="match status" value="2"/>
</dbReference>
<dbReference type="PROSITE" id="PS00715">
    <property type="entry name" value="SIGMA70_1"/>
    <property type="match status" value="1"/>
</dbReference>
<dbReference type="PROSITE" id="PS00716">
    <property type="entry name" value="SIGMA70_2"/>
    <property type="match status" value="1"/>
</dbReference>
<reference key="1">
    <citation type="journal article" date="2002" name="Proc. Natl. Acad. Sci. U.S.A.">
        <title>Extensive mosaic structure revealed by the complete genome sequence of uropathogenic Escherichia coli.</title>
        <authorList>
            <person name="Welch R.A."/>
            <person name="Burland V."/>
            <person name="Plunkett G. III"/>
            <person name="Redford P."/>
            <person name="Roesch P."/>
            <person name="Rasko D."/>
            <person name="Buckles E.L."/>
            <person name="Liou S.-R."/>
            <person name="Boutin A."/>
            <person name="Hackett J."/>
            <person name="Stroud D."/>
            <person name="Mayhew G.F."/>
            <person name="Rose D.J."/>
            <person name="Zhou S."/>
            <person name="Schwartz D.C."/>
            <person name="Perna N.T."/>
            <person name="Mobley H.L.T."/>
            <person name="Donnenberg M.S."/>
            <person name="Blattner F.R."/>
        </authorList>
    </citation>
    <scope>NUCLEOTIDE SEQUENCE [LARGE SCALE GENOMIC DNA]</scope>
    <source>
        <strain>CFT073 / ATCC 700928 / UPEC</strain>
    </source>
</reference>
<keyword id="KW-0963">Cytoplasm</keyword>
<keyword id="KW-0238">DNA-binding</keyword>
<keyword id="KW-1185">Reference proteome</keyword>
<keyword id="KW-0731">Sigma factor</keyword>
<keyword id="KW-0804">Transcription</keyword>
<keyword id="KW-0805">Transcription regulation</keyword>
<gene>
    <name evidence="1" type="primary">fliA</name>
    <name type="ordered locus">c2337</name>
</gene>
<accession>P0AEM7</accession>
<accession>P31804</accession>
<organism>
    <name type="scientific">Escherichia coli O6:H1 (strain CFT073 / ATCC 700928 / UPEC)</name>
    <dbReference type="NCBI Taxonomy" id="199310"/>
    <lineage>
        <taxon>Bacteria</taxon>
        <taxon>Pseudomonadati</taxon>
        <taxon>Pseudomonadota</taxon>
        <taxon>Gammaproteobacteria</taxon>
        <taxon>Enterobacterales</taxon>
        <taxon>Enterobacteriaceae</taxon>
        <taxon>Escherichia</taxon>
    </lineage>
</organism>
<sequence length="239" mass="27521">MNSLYTAEGVMDKHSLWQRYVPLVRHEALRLQVRLPASVELDDLLQAGGIGLLNAVERYDALQGTAFTTYAVQRIRGAMLDELRSRDWVPRSVRRNAREVAQAIGQLEQELGRNATETEVAERLGIDIADYRQMLLDTNNSQLFSYDEWREEHGDSIELVTDDHQRENPLQQLLDSNLRQRVMEAIETLPEREKLVLTLYYQEELNLKEIGAVLEVGESRVSQLHSQAIKRLRTKLGKL</sequence>
<proteinExistence type="inferred from homology"/>
<evidence type="ECO:0000255" key="1">
    <source>
        <dbReference type="HAMAP-Rule" id="MF_00962"/>
    </source>
</evidence>
<name>FLIA_ECOL6</name>